<name>KDGT_ECO24</name>
<reference key="1">
    <citation type="journal article" date="2008" name="J. Bacteriol.">
        <title>The pangenome structure of Escherichia coli: comparative genomic analysis of E. coli commensal and pathogenic isolates.</title>
        <authorList>
            <person name="Rasko D.A."/>
            <person name="Rosovitz M.J."/>
            <person name="Myers G.S.A."/>
            <person name="Mongodin E.F."/>
            <person name="Fricke W.F."/>
            <person name="Gajer P."/>
            <person name="Crabtree J."/>
            <person name="Sebaihia M."/>
            <person name="Thomson N.R."/>
            <person name="Chaudhuri R."/>
            <person name="Henderson I.R."/>
            <person name="Sperandio V."/>
            <person name="Ravel J."/>
        </authorList>
    </citation>
    <scope>NUCLEOTIDE SEQUENCE [LARGE SCALE GENOMIC DNA]</scope>
    <source>
        <strain>E24377A / ETEC</strain>
    </source>
</reference>
<proteinExistence type="inferred from homology"/>
<evidence type="ECO:0000255" key="1">
    <source>
        <dbReference type="HAMAP-Rule" id="MF_00070"/>
    </source>
</evidence>
<organism>
    <name type="scientific">Escherichia coli O139:H28 (strain E24377A / ETEC)</name>
    <dbReference type="NCBI Taxonomy" id="331111"/>
    <lineage>
        <taxon>Bacteria</taxon>
        <taxon>Pseudomonadati</taxon>
        <taxon>Pseudomonadota</taxon>
        <taxon>Gammaproteobacteria</taxon>
        <taxon>Enterobacterales</taxon>
        <taxon>Enterobacteriaceae</taxon>
        <taxon>Escherichia</taxon>
    </lineage>
</organism>
<dbReference type="EMBL" id="CP000800">
    <property type="protein sequence ID" value="ABV16973.1"/>
    <property type="molecule type" value="Genomic_DNA"/>
</dbReference>
<dbReference type="RefSeq" id="WP_001166062.1">
    <property type="nucleotide sequence ID" value="NC_009801.1"/>
</dbReference>
<dbReference type="KEGG" id="ecw:EcE24377A_4443"/>
<dbReference type="HOGENOM" id="CLU_057476_0_1_6"/>
<dbReference type="Proteomes" id="UP000001122">
    <property type="component" value="Chromosome"/>
</dbReference>
<dbReference type="GO" id="GO:0005886">
    <property type="term" value="C:plasma membrane"/>
    <property type="evidence" value="ECO:0007669"/>
    <property type="project" value="UniProtKB-SubCell"/>
</dbReference>
<dbReference type="GO" id="GO:0015649">
    <property type="term" value="F:2-keto-3-deoxygluconate:proton symporter activity"/>
    <property type="evidence" value="ECO:0007669"/>
    <property type="project" value="UniProtKB-UniRule"/>
</dbReference>
<dbReference type="HAMAP" id="MF_00070">
    <property type="entry name" value="KdgT"/>
    <property type="match status" value="1"/>
</dbReference>
<dbReference type="InterPro" id="IPR004684">
    <property type="entry name" value="2keto-3dGluconate_permease"/>
</dbReference>
<dbReference type="InterPro" id="IPR018395">
    <property type="entry name" value="2keto-3dGluconate_permease_sub"/>
</dbReference>
<dbReference type="NCBIfam" id="TIGR00793">
    <property type="entry name" value="kdgT"/>
    <property type="match status" value="1"/>
</dbReference>
<dbReference type="Pfam" id="PF03812">
    <property type="entry name" value="KdgT"/>
    <property type="match status" value="1"/>
</dbReference>
<comment type="function">
    <text evidence="1">Catalyzes the proton-dependent uptake of 2-keto-3-deoxygluconate (KDG) into the cell.</text>
</comment>
<comment type="catalytic activity">
    <reaction evidence="1">
        <text>2-dehydro-3-deoxy-D-gluconate(in) + H(+)(in) = 2-dehydro-3-deoxy-D-gluconate(out) + H(+)(out)</text>
        <dbReference type="Rhea" id="RHEA:29943"/>
        <dbReference type="ChEBI" id="CHEBI:15378"/>
        <dbReference type="ChEBI" id="CHEBI:57990"/>
    </reaction>
    <physiologicalReaction direction="right-to-left" evidence="1">
        <dbReference type="Rhea" id="RHEA:29945"/>
    </physiologicalReaction>
</comment>
<comment type="subcellular location">
    <subcellularLocation>
        <location evidence="1">Cell inner membrane</location>
        <topology evidence="1">Multi-pass membrane protein</topology>
    </subcellularLocation>
</comment>
<comment type="similarity">
    <text evidence="1">Belongs to the KdgT transporter family.</text>
</comment>
<gene>
    <name evidence="1" type="primary">kdgT</name>
    <name type="ordered locus">EcE24377A_4443</name>
</gene>
<sequence length="327" mass="33669">MQIKRSIEKIPGGMMLVPLFLGALCHTFSPGAGKYFGSFTNGMITGTVPILAVWFFCMGASIKLSATGTVLRKSGTLVVTKIAVAWVVAAIASRIIPEHGVEVGFFAGLSTLALVAAMDMTNGGLYASIMQQYGTKEEAGAFVLMSLESGPLMTMIILGTAGIASFEPHVFVGAVLPFLVGFALGNLDPELREFFSKAVQTLIPFFAFALGNTIDLTVIAQTGLLGILLGVAVIIVTGIPLIIADKLIGGGDGTAGIAASSSAGAAVATPVLIAEMVPAFKPMAPAATSLVATAVIVTSILVPIITSIWSRKVKARAAKIEILGTVK</sequence>
<feature type="chain" id="PRO_1000057465" description="2-keto-3-deoxygluconate permease">
    <location>
        <begin position="1"/>
        <end position="327"/>
    </location>
</feature>
<feature type="transmembrane region" description="Helical" evidence="1">
    <location>
        <begin position="10"/>
        <end position="30"/>
    </location>
</feature>
<feature type="transmembrane region" description="Helical" evidence="1">
    <location>
        <begin position="42"/>
        <end position="62"/>
    </location>
</feature>
<feature type="transmembrane region" description="Helical" evidence="1">
    <location>
        <begin position="73"/>
        <end position="93"/>
    </location>
</feature>
<feature type="transmembrane region" description="Helical" evidence="1">
    <location>
        <begin position="95"/>
        <end position="115"/>
    </location>
</feature>
<feature type="transmembrane region" description="Helical" evidence="1">
    <location>
        <begin position="139"/>
        <end position="159"/>
    </location>
</feature>
<feature type="transmembrane region" description="Helical" evidence="1">
    <location>
        <begin position="163"/>
        <end position="183"/>
    </location>
</feature>
<feature type="transmembrane region" description="Helical" evidence="1">
    <location>
        <begin position="199"/>
        <end position="219"/>
    </location>
</feature>
<feature type="transmembrane region" description="Helical" evidence="1">
    <location>
        <begin position="224"/>
        <end position="244"/>
    </location>
</feature>
<feature type="transmembrane region" description="Helical" evidence="1">
    <location>
        <begin position="254"/>
        <end position="274"/>
    </location>
</feature>
<feature type="transmembrane region" description="Helical" evidence="1">
    <location>
        <begin position="289"/>
        <end position="309"/>
    </location>
</feature>
<accession>A7ZUC3</accession>
<protein>
    <recommendedName>
        <fullName evidence="1">2-keto-3-deoxygluconate permease</fullName>
        <shortName evidence="1">KDG permease</shortName>
    </recommendedName>
</protein>
<keyword id="KW-0997">Cell inner membrane</keyword>
<keyword id="KW-1003">Cell membrane</keyword>
<keyword id="KW-0472">Membrane</keyword>
<keyword id="KW-1185">Reference proteome</keyword>
<keyword id="KW-0762">Sugar transport</keyword>
<keyword id="KW-0769">Symport</keyword>
<keyword id="KW-0812">Transmembrane</keyword>
<keyword id="KW-1133">Transmembrane helix</keyword>
<keyword id="KW-0813">Transport</keyword>